<accession>C5BJA8</accession>
<comment type="function">
    <text evidence="1">Na(+)/H(+) antiporter that extrudes sodium in exchange for external protons.</text>
</comment>
<comment type="catalytic activity">
    <reaction evidence="1">
        <text>2 Na(+)(in) + 3 H(+)(out) = 2 Na(+)(out) + 3 H(+)(in)</text>
        <dbReference type="Rhea" id="RHEA:29247"/>
        <dbReference type="ChEBI" id="CHEBI:15378"/>
        <dbReference type="ChEBI" id="CHEBI:29101"/>
    </reaction>
    <physiologicalReaction direction="left-to-right" evidence="1">
        <dbReference type="Rhea" id="RHEA:29248"/>
    </physiologicalReaction>
</comment>
<comment type="subcellular location">
    <subcellularLocation>
        <location evidence="1">Cell inner membrane</location>
        <topology evidence="1">Multi-pass membrane protein</topology>
    </subcellularLocation>
</comment>
<comment type="similarity">
    <text evidence="1">Belongs to the NhaB Na(+)/H(+) (TC 2.A.34) antiporter family.</text>
</comment>
<keyword id="KW-0050">Antiport</keyword>
<keyword id="KW-0997">Cell inner membrane</keyword>
<keyword id="KW-1003">Cell membrane</keyword>
<keyword id="KW-0406">Ion transport</keyword>
<keyword id="KW-0472">Membrane</keyword>
<keyword id="KW-1185">Reference proteome</keyword>
<keyword id="KW-0915">Sodium</keyword>
<keyword id="KW-0739">Sodium transport</keyword>
<keyword id="KW-0812">Transmembrane</keyword>
<keyword id="KW-1133">Transmembrane helix</keyword>
<keyword id="KW-0813">Transport</keyword>
<reference key="1">
    <citation type="journal article" date="2009" name="PLoS ONE">
        <title>The complete genome of Teredinibacter turnerae T7901: an intracellular endosymbiont of marine wood-boring bivalves (shipworms).</title>
        <authorList>
            <person name="Yang J.C."/>
            <person name="Madupu R."/>
            <person name="Durkin A.S."/>
            <person name="Ekborg N.A."/>
            <person name="Pedamallu C.S."/>
            <person name="Hostetler J.B."/>
            <person name="Radune D."/>
            <person name="Toms B.S."/>
            <person name="Henrissat B."/>
            <person name="Coutinho P.M."/>
            <person name="Schwarz S."/>
            <person name="Field L."/>
            <person name="Trindade-Silva A.E."/>
            <person name="Soares C.A.G."/>
            <person name="Elshahawi S."/>
            <person name="Hanora A."/>
            <person name="Schmidt E.W."/>
            <person name="Haygood M.G."/>
            <person name="Posfai J."/>
            <person name="Benner J."/>
            <person name="Madinger C."/>
            <person name="Nove J."/>
            <person name="Anton B."/>
            <person name="Chaudhary K."/>
            <person name="Foster J."/>
            <person name="Holman A."/>
            <person name="Kumar S."/>
            <person name="Lessard P.A."/>
            <person name="Luyten Y.A."/>
            <person name="Slatko B."/>
            <person name="Wood N."/>
            <person name="Wu B."/>
            <person name="Teplitski M."/>
            <person name="Mougous J.D."/>
            <person name="Ward N."/>
            <person name="Eisen J.A."/>
            <person name="Badger J.H."/>
            <person name="Distel D.L."/>
        </authorList>
    </citation>
    <scope>NUCLEOTIDE SEQUENCE [LARGE SCALE GENOMIC DNA]</scope>
    <source>
        <strain>ATCC 39867 / T7901</strain>
    </source>
</reference>
<proteinExistence type="inferred from homology"/>
<gene>
    <name evidence="1" type="primary">nhaB</name>
    <name type="ordered locus">TERTU_2113</name>
</gene>
<protein>
    <recommendedName>
        <fullName evidence="1">Na(+)/H(+) antiporter NhaB</fullName>
    </recommendedName>
    <alternativeName>
        <fullName evidence="1">Sodium/proton antiporter NhaB</fullName>
    </alternativeName>
</protein>
<feature type="chain" id="PRO_1000215679" description="Na(+)/H(+) antiporter NhaB">
    <location>
        <begin position="1"/>
        <end position="502"/>
    </location>
</feature>
<feature type="transmembrane region" description="Helical" evidence="1">
    <location>
        <begin position="27"/>
        <end position="49"/>
    </location>
</feature>
<feature type="transmembrane region" description="Helical" evidence="1">
    <location>
        <begin position="66"/>
        <end position="86"/>
    </location>
</feature>
<feature type="transmembrane region" description="Helical" evidence="1">
    <location>
        <begin position="95"/>
        <end position="115"/>
    </location>
</feature>
<feature type="transmembrane region" description="Helical" evidence="1">
    <location>
        <begin position="128"/>
        <end position="148"/>
    </location>
</feature>
<feature type="transmembrane region" description="Helical" evidence="1">
    <location>
        <begin position="149"/>
        <end position="169"/>
    </location>
</feature>
<feature type="transmembrane region" description="Helical" evidence="1">
    <location>
        <begin position="241"/>
        <end position="261"/>
    </location>
</feature>
<feature type="transmembrane region" description="Helical" evidence="1">
    <location>
        <begin position="299"/>
        <end position="318"/>
    </location>
</feature>
<feature type="transmembrane region" description="Helical" evidence="1">
    <location>
        <begin position="350"/>
        <end position="370"/>
    </location>
</feature>
<feature type="transmembrane region" description="Helical" evidence="1">
    <location>
        <begin position="394"/>
        <end position="414"/>
    </location>
</feature>
<feature type="transmembrane region" description="Helical" evidence="1">
    <location>
        <begin position="450"/>
        <end position="470"/>
    </location>
</feature>
<feature type="transmembrane region" description="Helical" evidence="1">
    <location>
        <begin position="477"/>
        <end position="497"/>
    </location>
</feature>
<name>NHAB_TERTT</name>
<evidence type="ECO:0000255" key="1">
    <source>
        <dbReference type="HAMAP-Rule" id="MF_01599"/>
    </source>
</evidence>
<sequence>MSSNLPAAFANNFLGQSSTWYKTTILAFLVINPVVYAIDPFIAGWVLILEFIFTLAMALKCYPLQPGGLLAIEAVILGMTSPESVFHETEANFEVILLLIFMVAGIYFMKDLLLYVFTKILLGIRSKIVLSLLFSLVAAVLSAFLDALTVTAVLIAVAVGFYAVYHQFASGGGLSSNQYDHTDDSKVDSSNREDLEGFRSFLRSLIMHGAVGTALGGVCTLVGEPQNLLIAQQADWNFVEFFLQVAPVSMPTLIGGLVTCIAVEKLGIFGYGAQLPDKVRTILMDFDKQETSKRTNRDIAALVVQALAGVVLMVSLALHLAEVGLIGLLVIILLTSFNGITEEHRIGHAFEEALPFTALLVVFFAVVAVIHDQHLFEPITHMLLHMDESVQGPMFFIANGLLSMISDNVFVATVYITEVKNALVAGDISREHFDLLAVAINTGTNLPSVATPNGQAAFLFLLTSALAPLIRLSYGRMVLMALPYTIVLSVIGYIAVYQLAAG</sequence>
<dbReference type="EMBL" id="CP001614">
    <property type="protein sequence ID" value="ACR12192.1"/>
    <property type="molecule type" value="Genomic_DNA"/>
</dbReference>
<dbReference type="RefSeq" id="WP_015818304.1">
    <property type="nucleotide sequence ID" value="NC_012997.1"/>
</dbReference>
<dbReference type="SMR" id="C5BJA8"/>
<dbReference type="KEGG" id="ttu:TERTU_2113"/>
<dbReference type="eggNOG" id="COG3067">
    <property type="taxonomic scope" value="Bacteria"/>
</dbReference>
<dbReference type="HOGENOM" id="CLU_041110_0_0_6"/>
<dbReference type="OrthoDB" id="5288732at2"/>
<dbReference type="Proteomes" id="UP000009080">
    <property type="component" value="Chromosome"/>
</dbReference>
<dbReference type="GO" id="GO:0005886">
    <property type="term" value="C:plasma membrane"/>
    <property type="evidence" value="ECO:0007669"/>
    <property type="project" value="UniProtKB-SubCell"/>
</dbReference>
<dbReference type="GO" id="GO:0015385">
    <property type="term" value="F:sodium:proton antiporter activity"/>
    <property type="evidence" value="ECO:0007669"/>
    <property type="project" value="InterPro"/>
</dbReference>
<dbReference type="HAMAP" id="MF_01599">
    <property type="entry name" value="NhaB"/>
    <property type="match status" value="1"/>
</dbReference>
<dbReference type="InterPro" id="IPR004671">
    <property type="entry name" value="Na+/H+_antiporter_NhaB"/>
</dbReference>
<dbReference type="NCBIfam" id="NF007093">
    <property type="entry name" value="PRK09547.1"/>
    <property type="match status" value="1"/>
</dbReference>
<dbReference type="PANTHER" id="PTHR43302:SF1">
    <property type="entry name" value="NA(+)_H(+) ANTIPORTER NHAB"/>
    <property type="match status" value="1"/>
</dbReference>
<dbReference type="PANTHER" id="PTHR43302">
    <property type="entry name" value="TRANSPORTER ARSB-RELATED"/>
    <property type="match status" value="1"/>
</dbReference>
<dbReference type="Pfam" id="PF06450">
    <property type="entry name" value="NhaB"/>
    <property type="match status" value="1"/>
</dbReference>
<organism>
    <name type="scientific">Teredinibacter turnerae (strain ATCC 39867 / T7901)</name>
    <dbReference type="NCBI Taxonomy" id="377629"/>
    <lineage>
        <taxon>Bacteria</taxon>
        <taxon>Pseudomonadati</taxon>
        <taxon>Pseudomonadota</taxon>
        <taxon>Gammaproteobacteria</taxon>
        <taxon>Cellvibrionales</taxon>
        <taxon>Cellvibrionaceae</taxon>
        <taxon>Teredinibacter</taxon>
    </lineage>
</organism>